<keyword id="KW-0963">Cytoplasm</keyword>
<keyword id="KW-0217">Developmental protein</keyword>
<keyword id="KW-0221">Differentiation</keyword>
<keyword id="KW-0479">Metal-binding</keyword>
<keyword id="KW-1267">Proteomics identification</keyword>
<keyword id="KW-1185">Reference proteome</keyword>
<keyword id="KW-0694">RNA-binding</keyword>
<keyword id="KW-0744">Spermatogenesis</keyword>
<keyword id="KW-0810">Translation regulation</keyword>
<keyword id="KW-0862">Zinc</keyword>
<keyword id="KW-0863">Zinc-finger</keyword>
<sequence length="138" mass="15132">MQLPPFDMWKDYFNLSQVVWALIASRGQRLETQEIEEPSPGPPLGQDQGLGAPGANGGLGTLCNFCKHNGESRHVYSSHQLKTPDGVVVCPILRHYVCPVCGATGDQAHTLKYCPLNGGQQSLYRRSGRNSAGRRVKR</sequence>
<evidence type="ECO:0000250" key="1"/>
<evidence type="ECO:0000255" key="2">
    <source>
        <dbReference type="PROSITE-ProRule" id="PRU00855"/>
    </source>
</evidence>
<evidence type="ECO:0000256" key="3">
    <source>
        <dbReference type="SAM" id="MobiDB-lite"/>
    </source>
</evidence>
<evidence type="ECO:0000269" key="4">
    <source>
    </source>
</evidence>
<evidence type="ECO:0000269" key="5">
    <source>
    </source>
</evidence>
<dbReference type="EMBL" id="BC042883">
    <property type="protein sequence ID" value="AAH42883.1"/>
    <property type="molecule type" value="mRNA"/>
</dbReference>
<dbReference type="EMBL" id="BC117484">
    <property type="protein sequence ID" value="AAI17485.1"/>
    <property type="molecule type" value="mRNA"/>
</dbReference>
<dbReference type="EMBL" id="BC117486">
    <property type="protein sequence ID" value="AAI17487.1"/>
    <property type="molecule type" value="mRNA"/>
</dbReference>
<dbReference type="CCDS" id="CCDS33056.1"/>
<dbReference type="RefSeq" id="NP_001025032.1">
    <property type="nucleotide sequence ID" value="NM_001029861.3"/>
</dbReference>
<dbReference type="SMR" id="P60321"/>
<dbReference type="BioGRID" id="130871">
    <property type="interactions" value="28"/>
</dbReference>
<dbReference type="ELM" id="P60321"/>
<dbReference type="FunCoup" id="P60321">
    <property type="interactions" value="66"/>
</dbReference>
<dbReference type="IntAct" id="P60321">
    <property type="interactions" value="25"/>
</dbReference>
<dbReference type="MINT" id="P60321"/>
<dbReference type="STRING" id="9606.ENSP00000341021"/>
<dbReference type="BioMuta" id="NANOS2"/>
<dbReference type="DMDM" id="41688561"/>
<dbReference type="MassIVE" id="P60321"/>
<dbReference type="PaxDb" id="9606-ENSP00000341021"/>
<dbReference type="PeptideAtlas" id="P60321"/>
<dbReference type="ProteomicsDB" id="57191"/>
<dbReference type="Antibodypedia" id="31412">
    <property type="antibodies" value="248 antibodies from 30 providers"/>
</dbReference>
<dbReference type="DNASU" id="339345"/>
<dbReference type="Ensembl" id="ENST00000341294.4">
    <property type="protein sequence ID" value="ENSP00000341021.2"/>
    <property type="gene ID" value="ENSG00000188425.4"/>
</dbReference>
<dbReference type="GeneID" id="339345"/>
<dbReference type="KEGG" id="hsa:339345"/>
<dbReference type="MANE-Select" id="ENST00000341294.4">
    <property type="protein sequence ID" value="ENSP00000341021.2"/>
    <property type="RefSeq nucleotide sequence ID" value="NM_001029861.3"/>
    <property type="RefSeq protein sequence ID" value="NP_001025032.1"/>
</dbReference>
<dbReference type="UCSC" id="uc002pdu.4">
    <property type="organism name" value="human"/>
</dbReference>
<dbReference type="AGR" id="HGNC:23292"/>
<dbReference type="CTD" id="339345"/>
<dbReference type="DisGeNET" id="339345"/>
<dbReference type="GeneCards" id="NANOS2"/>
<dbReference type="HGNC" id="HGNC:23292">
    <property type="gene designation" value="NANOS2"/>
</dbReference>
<dbReference type="HPA" id="ENSG00000188425">
    <property type="expression patterns" value="Tissue enriched (testis)"/>
</dbReference>
<dbReference type="MIM" id="608228">
    <property type="type" value="gene"/>
</dbReference>
<dbReference type="neXtProt" id="NX_P60321"/>
<dbReference type="OpenTargets" id="ENSG00000188425"/>
<dbReference type="PharmGKB" id="PA134909776"/>
<dbReference type="VEuPathDB" id="HostDB:ENSG00000188425"/>
<dbReference type="eggNOG" id="KOG4602">
    <property type="taxonomic scope" value="Eukaryota"/>
</dbReference>
<dbReference type="GeneTree" id="ENSGT00950000183135"/>
<dbReference type="HOGENOM" id="CLU_094055_1_0_1"/>
<dbReference type="InParanoid" id="P60321"/>
<dbReference type="OMA" id="WRDYFNL"/>
<dbReference type="OrthoDB" id="5864971at2759"/>
<dbReference type="PAN-GO" id="P60321">
    <property type="GO annotations" value="4 GO annotations based on evolutionary models"/>
</dbReference>
<dbReference type="PhylomeDB" id="P60321"/>
<dbReference type="TreeFam" id="TF326882"/>
<dbReference type="PathwayCommons" id="P60321"/>
<dbReference type="SignaLink" id="P60321"/>
<dbReference type="SIGNOR" id="P60321"/>
<dbReference type="BioGRID-ORCS" id="339345">
    <property type="hits" value="13 hits in 1145 CRISPR screens"/>
</dbReference>
<dbReference type="GenomeRNAi" id="339345"/>
<dbReference type="Pharos" id="P60321">
    <property type="development level" value="Tbio"/>
</dbReference>
<dbReference type="PRO" id="PR:P60321"/>
<dbReference type="Proteomes" id="UP000005640">
    <property type="component" value="Chromosome 19"/>
</dbReference>
<dbReference type="RNAct" id="P60321">
    <property type="molecule type" value="protein"/>
</dbReference>
<dbReference type="Bgee" id="ENSG00000188425">
    <property type="expression patterns" value="Expressed in male germ line stem cell (sensu Vertebrata) in testis and 26 other cell types or tissues"/>
</dbReference>
<dbReference type="GO" id="GO:0005737">
    <property type="term" value="C:cytoplasm"/>
    <property type="evidence" value="ECO:0000314"/>
    <property type="project" value="UniProtKB"/>
</dbReference>
<dbReference type="GO" id="GO:0005634">
    <property type="term" value="C:nucleus"/>
    <property type="evidence" value="ECO:0000314"/>
    <property type="project" value="UniProtKB"/>
</dbReference>
<dbReference type="GO" id="GO:0000932">
    <property type="term" value="C:P-body"/>
    <property type="evidence" value="ECO:0000250"/>
    <property type="project" value="UniProtKB"/>
</dbReference>
<dbReference type="GO" id="GO:0048471">
    <property type="term" value="C:perinuclear region of cytoplasm"/>
    <property type="evidence" value="ECO:0000314"/>
    <property type="project" value="UniProtKB"/>
</dbReference>
<dbReference type="GO" id="GO:0008047">
    <property type="term" value="F:enzyme activator activity"/>
    <property type="evidence" value="ECO:0000314"/>
    <property type="project" value="BHF-UCL"/>
</dbReference>
<dbReference type="GO" id="GO:0003729">
    <property type="term" value="F:mRNA binding"/>
    <property type="evidence" value="ECO:0000318"/>
    <property type="project" value="GO_Central"/>
</dbReference>
<dbReference type="GO" id="GO:0008270">
    <property type="term" value="F:zinc ion binding"/>
    <property type="evidence" value="ECO:0007669"/>
    <property type="project" value="UniProtKB-KW"/>
</dbReference>
<dbReference type="GO" id="GO:0030718">
    <property type="term" value="P:germ-line stem cell population maintenance"/>
    <property type="evidence" value="ECO:0000250"/>
    <property type="project" value="UniProtKB"/>
</dbReference>
<dbReference type="GO" id="GO:0006402">
    <property type="term" value="P:mRNA catabolic process"/>
    <property type="evidence" value="ECO:0000250"/>
    <property type="project" value="UniProtKB"/>
</dbReference>
<dbReference type="GO" id="GO:0061157">
    <property type="term" value="P:mRNA destabilization"/>
    <property type="evidence" value="ECO:0000314"/>
    <property type="project" value="BHF-UCL"/>
</dbReference>
<dbReference type="GO" id="GO:0045835">
    <property type="term" value="P:negative regulation of meiotic nuclear division"/>
    <property type="evidence" value="ECO:0000250"/>
    <property type="project" value="UniProtKB"/>
</dbReference>
<dbReference type="GO" id="GO:0017148">
    <property type="term" value="P:negative regulation of translation"/>
    <property type="evidence" value="ECO:0000314"/>
    <property type="project" value="BHF-UCL"/>
</dbReference>
<dbReference type="GO" id="GO:0048477">
    <property type="term" value="P:oogenesis"/>
    <property type="evidence" value="ECO:0000318"/>
    <property type="project" value="GO_Central"/>
</dbReference>
<dbReference type="GO" id="GO:0007283">
    <property type="term" value="P:spermatogenesis"/>
    <property type="evidence" value="ECO:0000250"/>
    <property type="project" value="UniProtKB"/>
</dbReference>
<dbReference type="FunFam" id="4.10.60.30:FF:000001">
    <property type="entry name" value="nanos homolog 3"/>
    <property type="match status" value="1"/>
</dbReference>
<dbReference type="Gene3D" id="4.10.60.30">
    <property type="entry name" value="Nanos, RNA-binding domain"/>
    <property type="match status" value="1"/>
</dbReference>
<dbReference type="InterPro" id="IPR008705">
    <property type="entry name" value="Nanos/Xcar2"/>
</dbReference>
<dbReference type="InterPro" id="IPR038129">
    <property type="entry name" value="Nanos_sf"/>
</dbReference>
<dbReference type="InterPro" id="IPR024161">
    <property type="entry name" value="Znf_nanos-typ"/>
</dbReference>
<dbReference type="PANTHER" id="PTHR12887">
    <property type="entry name" value="NANOS PROTEIN"/>
    <property type="match status" value="1"/>
</dbReference>
<dbReference type="Pfam" id="PF05741">
    <property type="entry name" value="zf-nanos"/>
    <property type="match status" value="1"/>
</dbReference>
<dbReference type="PROSITE" id="PS51522">
    <property type="entry name" value="ZF_NANOS"/>
    <property type="match status" value="1"/>
</dbReference>
<comment type="function">
    <text evidence="1">Plays a key role in the sexual differentiation of germ cells by promoting the male fate but suppressing the female fate. Represses the female fate pathways by suppressing meiosis, which in turn results in the promotion of the male fate. Maintains the suppression of meiosis by preventing STRA8 expression, which is required for premeiotic DNA replication, after CYP26B1 is decreased. Regulates the localization of the CCR4-NOT deadenylation complex to P-bodies and plays a role in recruiting the complex to trigger the degradation of mRNAs involved in meiosis. Required for the maintenance of the spermatogonial stem cell population. Not essential for the assembly of P-bodies but is required for the maintenance of their normal state (By similarity).</text>
</comment>
<comment type="subunit">
    <text evidence="1">Interacts with CNOT1, CNOT3, CNOT6L, CNOT7 and CNOT9.</text>
</comment>
<comment type="interaction">
    <interactant intactId="EBI-10216569">
        <id>P60321</id>
    </interactant>
    <interactant intactId="EBI-748961">
        <id>O95273</id>
        <label>CCNDBP1</label>
    </interactant>
    <organismsDiffer>false</organismsDiffer>
    <experiments>5</experiments>
</comment>
<comment type="interaction">
    <interactant intactId="EBI-10216569">
        <id>P60321</id>
    </interactant>
    <interactant intactId="EBI-749530">
        <id>P43365</id>
        <label>MAGEA12</label>
    </interactant>
    <organismsDiffer>false</organismsDiffer>
    <experiments>7</experiments>
</comment>
<comment type="interaction">
    <interactant intactId="EBI-10216569">
        <id>P60321</id>
    </interactant>
    <interactant intactId="EBI-717048">
        <id>P60903</id>
        <label>S100A10</label>
    </interactant>
    <organismsDiffer>false</organismsDiffer>
    <experiments>3</experiments>
</comment>
<comment type="subcellular location">
    <subcellularLocation>
        <location evidence="4">Cytoplasm</location>
    </subcellularLocation>
    <subcellularLocation>
        <location evidence="1">Cytoplasm</location>
        <location evidence="1">P-body</location>
    </subcellularLocation>
    <subcellularLocation>
        <location evidence="4">Cytoplasm</location>
        <location evidence="4">Perinuclear region</location>
    </subcellularLocation>
    <text evidence="1">Localizes at P-bodies during gonocyte development (By similarity). More abundant in perinuclear region of the cytoplasm of the germ cells of the adult testis.</text>
</comment>
<comment type="tissue specificity">
    <text evidence="4 5">Testis and ovary. Expression found in several spermatogenic stages: in cells on the periphery of the tubules which could correspond to spermatogonia, in spermatocytes and in round spermatids (at protein level).</text>
</comment>
<comment type="developmental stage">
    <text evidence="4 5">Fetal ovary and fetal testis. Present in all germ cells of seminiferous tubules of the 24-week fetus (at protein level).</text>
</comment>
<comment type="domain">
    <text evidence="2">The Nanos-type zinc finger is composed of two C2HC motifs, each motif binding one molecule of zinc. It is essential for the translation repression activity of the protein.</text>
</comment>
<comment type="similarity">
    <text evidence="2">Belongs to the nanos family.</text>
</comment>
<feature type="chain" id="PRO_0000207687" description="Nanos homolog 2">
    <location>
        <begin position="1"/>
        <end position="138"/>
    </location>
</feature>
<feature type="zinc finger region" description="Nanos-type" evidence="2">
    <location>
        <begin position="62"/>
        <end position="116"/>
    </location>
</feature>
<feature type="region of interest" description="Disordered" evidence="3">
    <location>
        <begin position="31"/>
        <end position="55"/>
    </location>
</feature>
<feature type="short sequence motif" description="C2HC 1" evidence="2">
    <location>
        <begin position="63"/>
        <end position="90"/>
    </location>
</feature>
<feature type="short sequence motif" description="C2HC 2" evidence="2">
    <location>
        <begin position="98"/>
        <end position="114"/>
    </location>
</feature>
<feature type="binding site" evidence="2">
    <location>
        <position position="63"/>
    </location>
    <ligand>
        <name>Zn(2+)</name>
        <dbReference type="ChEBI" id="CHEBI:29105"/>
        <label>1</label>
    </ligand>
</feature>
<feature type="binding site" evidence="2">
    <location>
        <position position="66"/>
    </location>
    <ligand>
        <name>Zn(2+)</name>
        <dbReference type="ChEBI" id="CHEBI:29105"/>
        <label>1</label>
    </ligand>
</feature>
<feature type="binding site" evidence="2">
    <location>
        <position position="79"/>
    </location>
    <ligand>
        <name>Zn(2+)</name>
        <dbReference type="ChEBI" id="CHEBI:29105"/>
        <label>1</label>
    </ligand>
</feature>
<feature type="binding site" evidence="2">
    <location>
        <position position="90"/>
    </location>
    <ligand>
        <name>Zn(2+)</name>
        <dbReference type="ChEBI" id="CHEBI:29105"/>
        <label>1</label>
    </ligand>
</feature>
<feature type="binding site" evidence="2">
    <location>
        <position position="98"/>
    </location>
    <ligand>
        <name>Zn(2+)</name>
        <dbReference type="ChEBI" id="CHEBI:29105"/>
        <label>2</label>
    </ligand>
</feature>
<feature type="binding site" evidence="2">
    <location>
        <position position="101"/>
    </location>
    <ligand>
        <name>Zn(2+)</name>
        <dbReference type="ChEBI" id="CHEBI:29105"/>
        <label>2</label>
    </ligand>
</feature>
<feature type="binding site" evidence="2">
    <location>
        <position position="109"/>
    </location>
    <ligand>
        <name>Zn(2+)</name>
        <dbReference type="ChEBI" id="CHEBI:29105"/>
        <label>2</label>
    </ligand>
</feature>
<feature type="binding site" evidence="2">
    <location>
        <position position="114"/>
    </location>
    <ligand>
        <name>Zn(2+)</name>
        <dbReference type="ChEBI" id="CHEBI:29105"/>
        <label>2</label>
    </ligand>
</feature>
<feature type="sequence variant" id="VAR_065246" description="In dbSNP:rs148451980." evidence="4">
    <original>H</original>
    <variation>Q</variation>
    <location>
        <position position="68"/>
    </location>
</feature>
<gene>
    <name type="primary">NANOS2</name>
    <name type="synonym">NOS2</name>
</gene>
<accession>P60321</accession>
<accession>Q17R30</accession>
<accession>Q4G0P8</accession>
<name>NANO2_HUMAN</name>
<protein>
    <recommendedName>
        <fullName>Nanos homolog 2</fullName>
        <shortName>NOS-2</shortName>
    </recommendedName>
</protein>
<proteinExistence type="evidence at protein level"/>
<organism>
    <name type="scientific">Homo sapiens</name>
    <name type="common">Human</name>
    <dbReference type="NCBI Taxonomy" id="9606"/>
    <lineage>
        <taxon>Eukaryota</taxon>
        <taxon>Metazoa</taxon>
        <taxon>Chordata</taxon>
        <taxon>Craniata</taxon>
        <taxon>Vertebrata</taxon>
        <taxon>Euteleostomi</taxon>
        <taxon>Mammalia</taxon>
        <taxon>Eutheria</taxon>
        <taxon>Euarchontoglires</taxon>
        <taxon>Primates</taxon>
        <taxon>Haplorrhini</taxon>
        <taxon>Catarrhini</taxon>
        <taxon>Hominidae</taxon>
        <taxon>Homo</taxon>
    </lineage>
</organism>
<reference key="1">
    <citation type="journal article" date="2004" name="Genome Res.">
        <title>The status, quality, and expansion of the NIH full-length cDNA project: the Mammalian Gene Collection (MGC).</title>
        <authorList>
            <consortium name="The MGC Project Team"/>
        </authorList>
    </citation>
    <scope>NUCLEOTIDE SEQUENCE [LARGE SCALE MRNA]</scope>
    <source>
        <tissue>Testis</tissue>
    </source>
</reference>
<reference key="2">
    <citation type="journal article" date="2009" name="Mol. Hum. Reprod.">
        <title>The highly conserved NANOS2 protein: testis-specific expression and significance for the human male reproduction.</title>
        <authorList>
            <person name="Kusz K.M."/>
            <person name="Tomczyk L."/>
            <person name="Sajek M."/>
            <person name="Spik A."/>
            <person name="Latos-Bielenska A."/>
            <person name="Jedrzejczak P."/>
            <person name="Pawelczyk L."/>
            <person name="Jaruzelska J."/>
        </authorList>
    </citation>
    <scope>SUBCELLULAR LOCATION</scope>
    <scope>TISSUE SPECIFICITY</scope>
    <scope>DEVELOPMENTAL STAGE</scope>
    <scope>VARIANT GLN-68</scope>
</reference>
<reference key="3">
    <citation type="journal article" date="2011" name="Hum. Mol. Genet.">
        <title>NANOS3 function in human germ cell development.</title>
        <authorList>
            <person name="Julaton V.T."/>
            <person name="Reijo Pera R.A."/>
        </authorList>
    </citation>
    <scope>TISSUE SPECIFICITY</scope>
    <scope>DEVELOPMENTAL STAGE</scope>
</reference>